<feature type="chain" id="PRO_1000059993" description="Glutamate-1-semialdehyde 2,1-aminomutase">
    <location>
        <begin position="1"/>
        <end position="426"/>
    </location>
</feature>
<feature type="modified residue" description="N6-(pyridoxal phosphate)lysine" evidence="1">
    <location>
        <position position="265"/>
    </location>
</feature>
<accession>A6T4V8</accession>
<gene>
    <name evidence="1" type="primary">hemL</name>
    <name type="ordered locus">KPN78578_01680</name>
    <name type="ORF">KPN_00169</name>
</gene>
<comment type="catalytic activity">
    <reaction evidence="1">
        <text>(S)-4-amino-5-oxopentanoate = 5-aminolevulinate</text>
        <dbReference type="Rhea" id="RHEA:14265"/>
        <dbReference type="ChEBI" id="CHEBI:57501"/>
        <dbReference type="ChEBI" id="CHEBI:356416"/>
        <dbReference type="EC" id="5.4.3.8"/>
    </reaction>
</comment>
<comment type="cofactor">
    <cofactor evidence="1">
        <name>pyridoxal 5'-phosphate</name>
        <dbReference type="ChEBI" id="CHEBI:597326"/>
    </cofactor>
</comment>
<comment type="pathway">
    <text evidence="1">Porphyrin-containing compound metabolism; protoporphyrin-IX biosynthesis; 5-aminolevulinate from L-glutamyl-tRNA(Glu): step 2/2.</text>
</comment>
<comment type="subunit">
    <text evidence="1">Homodimer.</text>
</comment>
<comment type="subcellular location">
    <subcellularLocation>
        <location evidence="1">Cytoplasm</location>
    </subcellularLocation>
</comment>
<comment type="similarity">
    <text evidence="1">Belongs to the class-III pyridoxal-phosphate-dependent aminotransferase family. HemL subfamily.</text>
</comment>
<keyword id="KW-0963">Cytoplasm</keyword>
<keyword id="KW-0413">Isomerase</keyword>
<keyword id="KW-0627">Porphyrin biosynthesis</keyword>
<keyword id="KW-0663">Pyridoxal phosphate</keyword>
<sequence length="426" mass="45328">MSKSENLYHAARELIPGGVNSPVRAFTGVGGTPLFIERADGAYLYDVDGKAYIDYVGSWGPMVLGHNHPAIRNAVIEAASRGLSFGAPTEMEVKMAALVTELVPTMDMVRMVNSGTEATMSAIRLARGFTGRDKIIKFEGCYHGHADCLLVKAGSGALTLGQPNSPGVPADFAKHTLTCTYNDLASVRAAFEQYPQEIACIIVEPVAGNMNCIPPQPEFLPGLRALCDEFGALLIIDEVMTGFRVALAGAQAYYGVEPDLTCLGKIIGGGMPVGAFGGRREVMDALAPTGPVYQAGTLSGNPIAMAAGFACLNEVAQPGVHETLTELTNQLAQGLLDAARDAGIPLVVNNVGGMFGIFFTDAETVTCYQDVVKCDVERFKRFFHLMLEEGVYLAPSAFEAGFMSVAHSEEDIDNTIDAARRVFAKL</sequence>
<reference key="1">
    <citation type="submission" date="2006-09" db="EMBL/GenBank/DDBJ databases">
        <authorList>
            <consortium name="The Klebsiella pneumonia Genome Sequencing Project"/>
            <person name="McClelland M."/>
            <person name="Sanderson E.K."/>
            <person name="Spieth J."/>
            <person name="Clifton W.S."/>
            <person name="Latreille P."/>
            <person name="Sabo A."/>
            <person name="Pepin K."/>
            <person name="Bhonagiri V."/>
            <person name="Porwollik S."/>
            <person name="Ali J."/>
            <person name="Wilson R.K."/>
        </authorList>
    </citation>
    <scope>NUCLEOTIDE SEQUENCE [LARGE SCALE GENOMIC DNA]</scope>
    <source>
        <strain>ATCC 700721 / MGH 78578</strain>
    </source>
</reference>
<dbReference type="EC" id="5.4.3.8" evidence="1"/>
<dbReference type="EMBL" id="CP000647">
    <property type="protein sequence ID" value="ABR75629.1"/>
    <property type="molecule type" value="Genomic_DNA"/>
</dbReference>
<dbReference type="RefSeq" id="WP_002889272.1">
    <property type="nucleotide sequence ID" value="NC_009648.1"/>
</dbReference>
<dbReference type="SMR" id="A6T4V8"/>
<dbReference type="STRING" id="272620.KPN_00169"/>
<dbReference type="jPOST" id="A6T4V8"/>
<dbReference type="PaxDb" id="272620-KPN_00169"/>
<dbReference type="EnsemblBacteria" id="ABR75629">
    <property type="protein sequence ID" value="ABR75629"/>
    <property type="gene ID" value="KPN_00169"/>
</dbReference>
<dbReference type="KEGG" id="kpn:KPN_00169"/>
<dbReference type="HOGENOM" id="CLU_016922_1_5_6"/>
<dbReference type="UniPathway" id="UPA00251">
    <property type="reaction ID" value="UER00317"/>
</dbReference>
<dbReference type="Proteomes" id="UP000000265">
    <property type="component" value="Chromosome"/>
</dbReference>
<dbReference type="GO" id="GO:0005737">
    <property type="term" value="C:cytoplasm"/>
    <property type="evidence" value="ECO:0007669"/>
    <property type="project" value="UniProtKB-SubCell"/>
</dbReference>
<dbReference type="GO" id="GO:0042286">
    <property type="term" value="F:glutamate-1-semialdehyde 2,1-aminomutase activity"/>
    <property type="evidence" value="ECO:0007669"/>
    <property type="project" value="UniProtKB-UniRule"/>
</dbReference>
<dbReference type="GO" id="GO:0030170">
    <property type="term" value="F:pyridoxal phosphate binding"/>
    <property type="evidence" value="ECO:0007669"/>
    <property type="project" value="InterPro"/>
</dbReference>
<dbReference type="GO" id="GO:0008483">
    <property type="term" value="F:transaminase activity"/>
    <property type="evidence" value="ECO:0007669"/>
    <property type="project" value="InterPro"/>
</dbReference>
<dbReference type="GO" id="GO:0006782">
    <property type="term" value="P:protoporphyrinogen IX biosynthetic process"/>
    <property type="evidence" value="ECO:0007669"/>
    <property type="project" value="UniProtKB-UniRule"/>
</dbReference>
<dbReference type="CDD" id="cd00610">
    <property type="entry name" value="OAT_like"/>
    <property type="match status" value="1"/>
</dbReference>
<dbReference type="FunFam" id="3.40.640.10:FF:000021">
    <property type="entry name" value="Glutamate-1-semialdehyde 2,1-aminomutase"/>
    <property type="match status" value="1"/>
</dbReference>
<dbReference type="FunFam" id="3.90.1150.10:FF:000012">
    <property type="entry name" value="Glutamate-1-semialdehyde 2,1-aminomutase"/>
    <property type="match status" value="1"/>
</dbReference>
<dbReference type="Gene3D" id="3.90.1150.10">
    <property type="entry name" value="Aspartate Aminotransferase, domain 1"/>
    <property type="match status" value="1"/>
</dbReference>
<dbReference type="Gene3D" id="3.40.640.10">
    <property type="entry name" value="Type I PLP-dependent aspartate aminotransferase-like (Major domain)"/>
    <property type="match status" value="1"/>
</dbReference>
<dbReference type="HAMAP" id="MF_00375">
    <property type="entry name" value="HemL_aminotrans_3"/>
    <property type="match status" value="1"/>
</dbReference>
<dbReference type="InterPro" id="IPR004639">
    <property type="entry name" value="4pyrrol_synth_GluAld_NH2Trfase"/>
</dbReference>
<dbReference type="InterPro" id="IPR005814">
    <property type="entry name" value="Aminotrans_3"/>
</dbReference>
<dbReference type="InterPro" id="IPR049704">
    <property type="entry name" value="Aminotrans_3_PPA_site"/>
</dbReference>
<dbReference type="InterPro" id="IPR015424">
    <property type="entry name" value="PyrdxlP-dep_Trfase"/>
</dbReference>
<dbReference type="InterPro" id="IPR015421">
    <property type="entry name" value="PyrdxlP-dep_Trfase_major"/>
</dbReference>
<dbReference type="InterPro" id="IPR015422">
    <property type="entry name" value="PyrdxlP-dep_Trfase_small"/>
</dbReference>
<dbReference type="NCBIfam" id="TIGR00713">
    <property type="entry name" value="hemL"/>
    <property type="match status" value="1"/>
</dbReference>
<dbReference type="NCBIfam" id="NF000818">
    <property type="entry name" value="PRK00062.1"/>
    <property type="match status" value="1"/>
</dbReference>
<dbReference type="PANTHER" id="PTHR43713">
    <property type="entry name" value="GLUTAMATE-1-SEMIALDEHYDE 2,1-AMINOMUTASE"/>
    <property type="match status" value="1"/>
</dbReference>
<dbReference type="PANTHER" id="PTHR43713:SF3">
    <property type="entry name" value="GLUTAMATE-1-SEMIALDEHYDE 2,1-AMINOMUTASE 1, CHLOROPLASTIC-RELATED"/>
    <property type="match status" value="1"/>
</dbReference>
<dbReference type="Pfam" id="PF00202">
    <property type="entry name" value="Aminotran_3"/>
    <property type="match status" value="1"/>
</dbReference>
<dbReference type="SUPFAM" id="SSF53383">
    <property type="entry name" value="PLP-dependent transferases"/>
    <property type="match status" value="1"/>
</dbReference>
<dbReference type="PROSITE" id="PS00600">
    <property type="entry name" value="AA_TRANSFER_CLASS_3"/>
    <property type="match status" value="1"/>
</dbReference>
<organism>
    <name type="scientific">Klebsiella pneumoniae subsp. pneumoniae (strain ATCC 700721 / MGH 78578)</name>
    <dbReference type="NCBI Taxonomy" id="272620"/>
    <lineage>
        <taxon>Bacteria</taxon>
        <taxon>Pseudomonadati</taxon>
        <taxon>Pseudomonadota</taxon>
        <taxon>Gammaproteobacteria</taxon>
        <taxon>Enterobacterales</taxon>
        <taxon>Enterobacteriaceae</taxon>
        <taxon>Klebsiella/Raoultella group</taxon>
        <taxon>Klebsiella</taxon>
        <taxon>Klebsiella pneumoniae complex</taxon>
    </lineage>
</organism>
<protein>
    <recommendedName>
        <fullName evidence="1">Glutamate-1-semialdehyde 2,1-aminomutase</fullName>
        <shortName evidence="1">GSA</shortName>
        <ecNumber evidence="1">5.4.3.8</ecNumber>
    </recommendedName>
    <alternativeName>
        <fullName evidence="1">Glutamate-1-semialdehyde aminotransferase</fullName>
        <shortName evidence="1">GSA-AT</shortName>
    </alternativeName>
</protein>
<proteinExistence type="inferred from homology"/>
<name>GSA_KLEP7</name>
<evidence type="ECO:0000255" key="1">
    <source>
        <dbReference type="HAMAP-Rule" id="MF_00375"/>
    </source>
</evidence>